<feature type="chain" id="PRO_0000022042" description="Peroxisomal biogenesis factor 8">
    <location>
        <begin position="1"/>
        <end position="713"/>
    </location>
</feature>
<feature type="region of interest" description="Disordered" evidence="2">
    <location>
        <begin position="1"/>
        <end position="31"/>
    </location>
</feature>
<feature type="short sequence motif" description="Microbody targeting signal" evidence="1">
    <location>
        <begin position="711"/>
        <end position="713"/>
    </location>
</feature>
<feature type="compositionally biased region" description="Polar residues" evidence="2">
    <location>
        <begin position="7"/>
        <end position="30"/>
    </location>
</feature>
<comment type="function">
    <text evidence="5 6">Essential component of the machinery required for the import of both PTS1 and PTS2 (and perhaps all) peroxisomal matrix proteins (PubMed:7738036). Binding of PEX8 to the N-terminus of PEX5 cargo receptor induces a conformational change of the TPR domains and decrease their binding affinity to cargo, facilitating the release of the PTS1 proteins within the peroxisome (PubMed:23902771).</text>
</comment>
<comment type="subunit">
    <text evidence="5">Interacts with PEX5 (via N-terminus).</text>
</comment>
<comment type="subcellular location">
    <subcellularLocation>
        <location evidence="6">Peroxisome membrane</location>
        <topology evidence="9">Peripheral membrane protein</topology>
    </subcellularLocation>
</comment>
<comment type="induction">
    <text evidence="3 4">Induced in presence of methanol by the transcription factor MRX1 that binds the 5'-CYCC-3' consensus sequence within the PEX8 promoter.</text>
</comment>
<comment type="disruption phenotype">
    <text evidence="6">Leads to a peroxisomal-deficient phenotype with the absence of peroxisomes and the accumulation of aberrant peroxisomal structures resembling 'membranous ghosts'.</text>
</comment>
<keyword id="KW-0002">3D-structure</keyword>
<keyword id="KW-0472">Membrane</keyword>
<keyword id="KW-0576">Peroxisome</keyword>
<organism>
    <name type="scientific">Komagataella pastoris</name>
    <name type="common">Yeast</name>
    <name type="synonym">Pichia pastoris</name>
    <dbReference type="NCBI Taxonomy" id="4922"/>
    <lineage>
        <taxon>Eukaryota</taxon>
        <taxon>Fungi</taxon>
        <taxon>Dikarya</taxon>
        <taxon>Ascomycota</taxon>
        <taxon>Saccharomycotina</taxon>
        <taxon>Pichiomycetes</taxon>
        <taxon>Pichiales</taxon>
        <taxon>Pichiaceae</taxon>
        <taxon>Komagataella</taxon>
    </lineage>
</organism>
<accession>Q01962</accession>
<protein>
    <recommendedName>
        <fullName evidence="7">Peroxisomal biogenesis factor 8</fullName>
    </recommendedName>
    <alternativeName>
        <fullName evidence="7">Peroxin-8</fullName>
    </alternativeName>
    <alternativeName>
        <fullName evidence="8">Peroxisomal protein PER3</fullName>
    </alternativeName>
</protein>
<dbReference type="EMBL" id="L40485">
    <property type="protein sequence ID" value="AAC41653.1"/>
    <property type="molecule type" value="Genomic_DNA"/>
</dbReference>
<dbReference type="PIR" id="A56439">
    <property type="entry name" value="A56439"/>
</dbReference>
<dbReference type="PDB" id="8RQT">
    <property type="method" value="X-ray"/>
    <property type="resolution" value="2.41 A"/>
    <property type="chains" value="A=1-713"/>
</dbReference>
<dbReference type="PDBsum" id="8RQT"/>
<dbReference type="SMR" id="Q01962"/>
<dbReference type="GO" id="GO:0005778">
    <property type="term" value="C:peroxisomal membrane"/>
    <property type="evidence" value="ECO:0007669"/>
    <property type="project" value="UniProtKB-SubCell"/>
</dbReference>
<dbReference type="InterPro" id="IPR055334">
    <property type="entry name" value="PEX8-like"/>
</dbReference>
<dbReference type="PANTHER" id="PTHR39214">
    <property type="entry name" value="MICROBODY (PEROXISOME) BIOGENESIS PROTEIN PEROXIN 8 (EUROFUNG)"/>
    <property type="match status" value="1"/>
</dbReference>
<dbReference type="PANTHER" id="PTHR39214:SF1">
    <property type="entry name" value="MICROBODY (PEROXISOME) BIOGENESIS PROTEIN PEROXIN 8 (EUROFUNG)"/>
    <property type="match status" value="1"/>
</dbReference>
<reference key="1">
    <citation type="journal article" date="1995" name="J. Biol. Chem.">
        <title>PER3, a gene required for peroxisome biogenesis in Pichia pastoris, encodes a peroxisomal membrane protein involved in protein import.</title>
        <authorList>
            <person name="Liu H."/>
            <person name="Tan X."/>
            <person name="Russell K.A."/>
            <person name="Veenhuis M."/>
            <person name="Cregg J.M."/>
        </authorList>
    </citation>
    <scope>NUCLEOTIDE SEQUENCE [GENOMIC DNA]</scope>
    <scope>FUNCTION</scope>
    <scope>DISRUPTION PHENOTYPE</scope>
    <scope>SUBCELLULAR LOCATION</scope>
</reference>
<reference key="2">
    <citation type="journal article" date="2006" name="Mol. Cell. Biol.">
        <title>Mxr1p, a key regulator of the methanol utilization pathway and peroxisomal genes in Pichia pastoris.</title>
        <authorList>
            <person name="Lin-Cereghino G.P."/>
            <person name="Godfrey L."/>
            <person name="de la Cruz B.J."/>
            <person name="Johnson S."/>
            <person name="Khuongsathiene S."/>
            <person name="Tolstorukov I."/>
            <person name="Yan M."/>
            <person name="Lin-Cereghino J."/>
            <person name="Veenhuis M."/>
            <person name="Subramani S."/>
            <person name="Cregg J.M."/>
        </authorList>
    </citation>
    <scope>INDUCTION</scope>
</reference>
<reference key="3">
    <citation type="journal article" date="2010" name="Yeast">
        <title>Identification of Mxr1p-binding sites in the promoters of genes encoding dihydroxyacetone synthase and peroxin 8 of the methylotrophic yeast Pichia pastoris.</title>
        <authorList>
            <person name="Kranthi B.V."/>
            <person name="Kumar H.R."/>
            <person name="Rangarajan P.N."/>
        </authorList>
    </citation>
    <scope>INDUCTION</scope>
</reference>
<reference key="4">
    <citation type="journal article" date="2013" name="J. Biol. Chem.">
        <title>Redox-regulated cargo binding and release by the peroxisomal targeting signal receptor, Pex5.</title>
        <authorList>
            <person name="Ma C."/>
            <person name="Hagstrom D."/>
            <person name="Polley S.G."/>
            <person name="Subramani S."/>
        </authorList>
    </citation>
    <scope>FUNCTION</scope>
    <scope>INTERACTION WITH PEX5</scope>
</reference>
<gene>
    <name evidence="7" type="primary">PEX8</name>
    <name evidence="8" type="synonym">PER3</name>
</gene>
<name>PEX8_PICPA</name>
<proteinExistence type="evidence at protein level"/>
<sequence>MYRLGSQGRSIQSQLQNGDSSSGRPLQLQGTGMREAQRIPQQLDYLLAEIISPNEDTNVIGYLAYYYPKLKNEQNVALLTDFFLRCPTYFSHSNVVSLRNNYPVMEAFNYIMTTKFKVSQPTVPFYRFYAAVLASLLNCEKTDPSHHWKLIPILTGVLLSIKGRDDVELYPDHSRSIKGSDTAVAQLLQRCLLRFYQSGDARSYDLNALVIISMSCALDYVEDDTIKKILYCFNYTRAIIDLIYYSPYGLNDSDIPLLSDSSVNSQSFDQLLNNNPALKHLNRLSFLFERTVKLNDGSIQSNLNDIDISLNKMQSFSEKLSKKISVLDDDSSKGVGQLLRQCLYASIIIHQAILTTFFQLDNADYTKYFLPSFSRKILSILFNLFFIVDRIGTGGFQPYNFVYLTCLQGIIQYDMKTAESLVKTFTTGINYSSLKDSEVARAKLLFTLNLMEQIVNICSDDLRLELIVPLVEDLVNNKNACVDIHNHVFKSIFESAHSVILKFFTVVDSSVKNVDYETNVTLVSEKIIPYLTLVIDQFPEFLSINQLDIAIETISRTVFPDSPIYSYDKNISSMFLNVLFNKCLTVDNDELVELPAIEAVVAPKNDEENNTSDAQDGGPKELQSLNDLKSRRSALISALISVFPLIPVKDYTKWLSIAFYDLIVATPERTERAFLQERLWDCVVGTNKYDPQKGNLGIMWWYENVNAQSTAKL</sequence>
<evidence type="ECO:0000255" key="1"/>
<evidence type="ECO:0000256" key="2">
    <source>
        <dbReference type="SAM" id="MobiDB-lite"/>
    </source>
</evidence>
<evidence type="ECO:0000269" key="3">
    <source>
    </source>
</evidence>
<evidence type="ECO:0000269" key="4">
    <source>
    </source>
</evidence>
<evidence type="ECO:0000269" key="5">
    <source>
    </source>
</evidence>
<evidence type="ECO:0000269" key="6">
    <source>
    </source>
</evidence>
<evidence type="ECO:0000303" key="7">
    <source>
    </source>
</evidence>
<evidence type="ECO:0000303" key="8">
    <source>
    </source>
</evidence>
<evidence type="ECO:0000305" key="9"/>